<reference key="1">
    <citation type="journal article" date="1998" name="Science">
        <title>Genome sequence of the nematode C. elegans: a platform for investigating biology.</title>
        <authorList>
            <consortium name="The C. elegans sequencing consortium"/>
        </authorList>
    </citation>
    <scope>NUCLEOTIDE SEQUENCE [LARGE SCALE GENOMIC DNA]</scope>
    <source>
        <strain>Bristol N2</strain>
    </source>
</reference>
<reference key="2">
    <citation type="journal article" date="2015" name="Nature">
        <title>Coordination of mitophagy and mitochondrial biogenesis during ageing in C. elegans.</title>
        <authorList>
            <person name="Palikaras K."/>
            <person name="Lionaki E."/>
            <person name="Tavernarakis N."/>
        </authorList>
    </citation>
    <scope>FUNCTION</scope>
    <scope>DISRUPTION PHENOTYPE</scope>
</reference>
<feature type="transit peptide" description="Mitochondrion" evidence="3">
    <location>
        <begin position="1"/>
        <end position="74"/>
    </location>
</feature>
<feature type="chain" id="PRO_0000086839" description="Serine/threonine-protein kinase pink-1, mitochondrial">
    <location>
        <begin position="75"/>
        <end position="641"/>
    </location>
</feature>
<feature type="domain" description="Protein kinase" evidence="4">
    <location>
        <begin position="137"/>
        <end position="483"/>
    </location>
</feature>
<feature type="active site" description="Proton acceptor" evidence="4">
    <location>
        <position position="338"/>
    </location>
</feature>
<feature type="binding site" evidence="4">
    <location>
        <begin position="143"/>
        <end position="151"/>
    </location>
    <ligand>
        <name>ATP</name>
        <dbReference type="ChEBI" id="CHEBI:30616"/>
    </ligand>
</feature>
<feature type="binding site" evidence="4">
    <location>
        <position position="199"/>
    </location>
    <ligand>
        <name>ATP</name>
        <dbReference type="ChEBI" id="CHEBI:30616"/>
    </ligand>
</feature>
<protein>
    <recommendedName>
        <fullName>Serine/threonine-protein kinase pink-1, mitochondrial</fullName>
        <ecNumber>2.7.11.1</ecNumber>
    </recommendedName>
    <alternativeName>
        <fullName>PTEN-induced kinase 1 homolog</fullName>
    </alternativeName>
</protein>
<gene>
    <name type="primary">pink-1</name>
    <name type="ORF">EEED8.9</name>
</gene>
<sequence>MSMKRFGKAAYRIANELVAKGGRLPIFQRFLPRIFPATYNLGVHVVLKKAPFPRQNALRIARLVTRHGRVFRPFSSVIIERHRFQNQNDWRRKFQPIRKELPRNVDLVERIRQIFGNSLRYNEDLKSTEWPNRIDSYEFGEFLGQGCNAAVYSARLANSDAESSGNTHYGAGFNEVTNILAEIPPVSKVAQKKFPLAIKLMFNFEHDRDGDAHLLKSMGNELAPYPNAAKLLNGQMGTFRPLPAKHPNVVRIQTAFIDSLKVLPDAIERYPDALHTARWYESIASEPKTMYVVMRRYRQTLHEYVWTRHRNYWTGRVIIAQLLEACTYLHKHKVAQRDMKSDNILLEYDFDDEIPQLVVADFGCALACDNWQVDYESDEVSLGGNAKTKAPEIATAVPGKNVKVNFEMADTWAAGGLSYEVLTRSNPFYKLLDTATYQESELPALPSRVNFVARDVIFDLLKRDPNERVKPNIAANALNLSLFRMGEDVKQMMEKCGISQMTTLLAGSSKVLSQKINSRLDKVMNLITAETIMANLAPHLISRAERQLRATFLSRMNREDIWRSLQYFFPAGVQLDTPATSSDCLETISSLMSSFSNDSENYEKQQKPAKNGYNNVPLLLRNVIRTDADGINGIVHRVRSK</sequence>
<dbReference type="EC" id="2.7.11.1"/>
<dbReference type="EMBL" id="FO081042">
    <property type="protein sequence ID" value="CCD68737.1"/>
    <property type="molecule type" value="Genomic_DNA"/>
</dbReference>
<dbReference type="PIR" id="T15919">
    <property type="entry name" value="T15919"/>
</dbReference>
<dbReference type="RefSeq" id="NP_495017.1">
    <property type="nucleotide sequence ID" value="NM_062616.7"/>
</dbReference>
<dbReference type="SMR" id="Q09298"/>
<dbReference type="FunCoup" id="Q09298">
    <property type="interactions" value="1102"/>
</dbReference>
<dbReference type="STRING" id="6239.EEED8.9.1"/>
<dbReference type="PaxDb" id="6239-EEED8.9"/>
<dbReference type="EnsemblMetazoa" id="EEED8.9.1">
    <property type="protein sequence ID" value="EEED8.9.1"/>
    <property type="gene ID" value="WBGene00017137"/>
</dbReference>
<dbReference type="GeneID" id="173918"/>
<dbReference type="KEGG" id="cel:CELE_EEED8.9"/>
<dbReference type="UCSC" id="EEED8.9">
    <property type="organism name" value="c. elegans"/>
</dbReference>
<dbReference type="AGR" id="WB:WBGene00017137"/>
<dbReference type="CTD" id="173918"/>
<dbReference type="WormBase" id="EEED8.9">
    <property type="protein sequence ID" value="CE28904"/>
    <property type="gene ID" value="WBGene00017137"/>
    <property type="gene designation" value="pink-1"/>
</dbReference>
<dbReference type="eggNOG" id="KOG4158">
    <property type="taxonomic scope" value="Eukaryota"/>
</dbReference>
<dbReference type="GeneTree" id="ENSGT00390000001206"/>
<dbReference type="HOGENOM" id="CLU_028921_0_0_1"/>
<dbReference type="InParanoid" id="Q09298"/>
<dbReference type="OMA" id="QMYKAFT"/>
<dbReference type="OrthoDB" id="1405469at2759"/>
<dbReference type="PhylomeDB" id="Q09298"/>
<dbReference type="Reactome" id="R-CEL-5205685">
    <property type="pathway name" value="PINK1-PRKN Mediated Mitophagy"/>
</dbReference>
<dbReference type="PRO" id="PR:Q09298"/>
<dbReference type="Proteomes" id="UP000001940">
    <property type="component" value="Chromosome II"/>
</dbReference>
<dbReference type="Bgee" id="WBGene00017137">
    <property type="expression patterns" value="Expressed in pharyngeal muscle cell (C elegans) and 3 other cell types or tissues"/>
</dbReference>
<dbReference type="GO" id="GO:0005737">
    <property type="term" value="C:cytoplasm"/>
    <property type="evidence" value="ECO:0000314"/>
    <property type="project" value="WormBase"/>
</dbReference>
<dbReference type="GO" id="GO:0005739">
    <property type="term" value="C:mitochondrion"/>
    <property type="evidence" value="ECO:0000314"/>
    <property type="project" value="WormBase"/>
</dbReference>
<dbReference type="GO" id="GO:0005524">
    <property type="term" value="F:ATP binding"/>
    <property type="evidence" value="ECO:0007669"/>
    <property type="project" value="UniProtKB-KW"/>
</dbReference>
<dbReference type="GO" id="GO:0046872">
    <property type="term" value="F:metal ion binding"/>
    <property type="evidence" value="ECO:0007669"/>
    <property type="project" value="UniProtKB-KW"/>
</dbReference>
<dbReference type="GO" id="GO:0106310">
    <property type="term" value="F:protein serine kinase activity"/>
    <property type="evidence" value="ECO:0007669"/>
    <property type="project" value="RHEA"/>
</dbReference>
<dbReference type="GO" id="GO:0004674">
    <property type="term" value="F:protein serine/threonine kinase activity"/>
    <property type="evidence" value="ECO:0000318"/>
    <property type="project" value="GO_Central"/>
</dbReference>
<dbReference type="GO" id="GO:0000422">
    <property type="term" value="P:autophagy of mitochondrion"/>
    <property type="evidence" value="ECO:0000318"/>
    <property type="project" value="GO_Central"/>
</dbReference>
<dbReference type="GO" id="GO:0048846">
    <property type="term" value="P:axon extension involved in axon guidance"/>
    <property type="evidence" value="ECO:0000315"/>
    <property type="project" value="WormBase"/>
</dbReference>
<dbReference type="GO" id="GO:0007411">
    <property type="term" value="P:axon guidance"/>
    <property type="evidence" value="ECO:0000315"/>
    <property type="project" value="WormBase"/>
</dbReference>
<dbReference type="GO" id="GO:0034599">
    <property type="term" value="P:cellular response to oxidative stress"/>
    <property type="evidence" value="ECO:0000315"/>
    <property type="project" value="WormBase"/>
</dbReference>
<dbReference type="GO" id="GO:0007005">
    <property type="term" value="P:mitochondrion organization"/>
    <property type="evidence" value="ECO:0000315"/>
    <property type="project" value="WormBase"/>
</dbReference>
<dbReference type="GO" id="GO:0000423">
    <property type="term" value="P:mitophagy"/>
    <property type="evidence" value="ECO:0000315"/>
    <property type="project" value="WormBase"/>
</dbReference>
<dbReference type="GO" id="GO:0090141">
    <property type="term" value="P:positive regulation of mitochondrial fission"/>
    <property type="evidence" value="ECO:0000318"/>
    <property type="project" value="GO_Central"/>
</dbReference>
<dbReference type="GO" id="GO:0031398">
    <property type="term" value="P:positive regulation of protein ubiquitination"/>
    <property type="evidence" value="ECO:0000315"/>
    <property type="project" value="WormBase"/>
</dbReference>
<dbReference type="GO" id="GO:0042981">
    <property type="term" value="P:regulation of apoptotic process"/>
    <property type="evidence" value="ECO:0000318"/>
    <property type="project" value="GO_Central"/>
</dbReference>
<dbReference type="GO" id="GO:0034976">
    <property type="term" value="P:response to endoplasmic reticulum stress"/>
    <property type="evidence" value="ECO:0000316"/>
    <property type="project" value="WormBase"/>
</dbReference>
<dbReference type="CDD" id="cd14018">
    <property type="entry name" value="STKc_PINK1"/>
    <property type="match status" value="1"/>
</dbReference>
<dbReference type="Gene3D" id="1.10.510.10">
    <property type="entry name" value="Transferase(Phosphotransferase) domain 1"/>
    <property type="match status" value="1"/>
</dbReference>
<dbReference type="InterPro" id="IPR011009">
    <property type="entry name" value="Kinase-like_dom_sf"/>
</dbReference>
<dbReference type="InterPro" id="IPR051511">
    <property type="entry name" value="MitoQC_Scaffold_Kinases"/>
</dbReference>
<dbReference type="InterPro" id="IPR040110">
    <property type="entry name" value="PINK1_STKc"/>
</dbReference>
<dbReference type="InterPro" id="IPR000719">
    <property type="entry name" value="Prot_kinase_dom"/>
</dbReference>
<dbReference type="PANTHER" id="PTHR22972">
    <property type="entry name" value="SERINE/THREONINE PROTEIN KINASE"/>
    <property type="match status" value="1"/>
</dbReference>
<dbReference type="PANTHER" id="PTHR22972:SF7">
    <property type="entry name" value="SERINE_THREONINE-PROTEIN KINASE PINK1, MITOCHONDRIAL"/>
    <property type="match status" value="1"/>
</dbReference>
<dbReference type="Pfam" id="PF00069">
    <property type="entry name" value="Pkinase"/>
    <property type="match status" value="1"/>
</dbReference>
<dbReference type="SMART" id="SM00220">
    <property type="entry name" value="S_TKc"/>
    <property type="match status" value="1"/>
</dbReference>
<dbReference type="SUPFAM" id="SSF56112">
    <property type="entry name" value="Protein kinase-like (PK-like)"/>
    <property type="match status" value="1"/>
</dbReference>
<dbReference type="PROSITE" id="PS50011">
    <property type="entry name" value="PROTEIN_KINASE_DOM"/>
    <property type="match status" value="1"/>
</dbReference>
<proteinExistence type="inferred from homology"/>
<comment type="function">
    <text evidence="2 5">Protects against mitochondrial dysfunction during cellular stress, potentially by phosphorylating mitochondrial proteins (By similarity). Plays a role in mitophagy (PubMed:25896323).</text>
</comment>
<comment type="catalytic activity">
    <reaction>
        <text>L-seryl-[protein] + ATP = O-phospho-L-seryl-[protein] + ADP + H(+)</text>
        <dbReference type="Rhea" id="RHEA:17989"/>
        <dbReference type="Rhea" id="RHEA-COMP:9863"/>
        <dbReference type="Rhea" id="RHEA-COMP:11604"/>
        <dbReference type="ChEBI" id="CHEBI:15378"/>
        <dbReference type="ChEBI" id="CHEBI:29999"/>
        <dbReference type="ChEBI" id="CHEBI:30616"/>
        <dbReference type="ChEBI" id="CHEBI:83421"/>
        <dbReference type="ChEBI" id="CHEBI:456216"/>
        <dbReference type="EC" id="2.7.11.1"/>
    </reaction>
</comment>
<comment type="catalytic activity">
    <reaction>
        <text>L-threonyl-[protein] + ATP = O-phospho-L-threonyl-[protein] + ADP + H(+)</text>
        <dbReference type="Rhea" id="RHEA:46608"/>
        <dbReference type="Rhea" id="RHEA-COMP:11060"/>
        <dbReference type="Rhea" id="RHEA-COMP:11605"/>
        <dbReference type="ChEBI" id="CHEBI:15378"/>
        <dbReference type="ChEBI" id="CHEBI:30013"/>
        <dbReference type="ChEBI" id="CHEBI:30616"/>
        <dbReference type="ChEBI" id="CHEBI:61977"/>
        <dbReference type="ChEBI" id="CHEBI:456216"/>
        <dbReference type="EC" id="2.7.11.1"/>
    </reaction>
</comment>
<comment type="cofactor">
    <cofactor>
        <name>Mg(2+)</name>
        <dbReference type="ChEBI" id="CHEBI:18420"/>
    </cofactor>
</comment>
<comment type="subcellular location">
    <subcellularLocation>
        <location evidence="1">Mitochondrion</location>
    </subcellularLocation>
</comment>
<comment type="PTM">
    <text evidence="1">Autophosphorylated.</text>
</comment>
<comment type="disruption phenotype">
    <text evidence="5">RNAi-mediated knockdown in daf-2, isp-1, or clk-1 mutant backgrounds suppresses their increased lifespan phenotype.</text>
</comment>
<comment type="similarity">
    <text evidence="4">Belongs to the protein kinase superfamily. Ser/Thr protein kinase family.</text>
</comment>
<evidence type="ECO:0000250" key="1"/>
<evidence type="ECO:0000250" key="2">
    <source>
        <dbReference type="UniProtKB" id="Q9BXM7"/>
    </source>
</evidence>
<evidence type="ECO:0000255" key="3"/>
<evidence type="ECO:0000255" key="4">
    <source>
        <dbReference type="PROSITE-ProRule" id="PRU00159"/>
    </source>
</evidence>
<evidence type="ECO:0000269" key="5">
    <source>
    </source>
</evidence>
<name>PINK1_CAEEL</name>
<accession>Q09298</accession>
<keyword id="KW-0067">ATP-binding</keyword>
<keyword id="KW-0418">Kinase</keyword>
<keyword id="KW-0460">Magnesium</keyword>
<keyword id="KW-0479">Metal-binding</keyword>
<keyword id="KW-0496">Mitochondrion</keyword>
<keyword id="KW-0547">Nucleotide-binding</keyword>
<keyword id="KW-1185">Reference proteome</keyword>
<keyword id="KW-0723">Serine/threonine-protein kinase</keyword>
<keyword id="KW-0808">Transferase</keyword>
<keyword id="KW-0809">Transit peptide</keyword>
<organism>
    <name type="scientific">Caenorhabditis elegans</name>
    <dbReference type="NCBI Taxonomy" id="6239"/>
    <lineage>
        <taxon>Eukaryota</taxon>
        <taxon>Metazoa</taxon>
        <taxon>Ecdysozoa</taxon>
        <taxon>Nematoda</taxon>
        <taxon>Chromadorea</taxon>
        <taxon>Rhabditida</taxon>
        <taxon>Rhabditina</taxon>
        <taxon>Rhabditomorpha</taxon>
        <taxon>Rhabditoidea</taxon>
        <taxon>Rhabditidae</taxon>
        <taxon>Peloderinae</taxon>
        <taxon>Caenorhabditis</taxon>
    </lineage>
</organism>